<name>RL18_AGARV</name>
<gene>
    <name evidence="1" type="primary">rplR</name>
    <name type="ordered locus">EUBREC_0433</name>
</gene>
<reference key="1">
    <citation type="journal article" date="2009" name="Proc. Natl. Acad. Sci. U.S.A.">
        <title>Characterizing a model human gut microbiota composed of members of its two dominant bacterial phyla.</title>
        <authorList>
            <person name="Mahowald M.A."/>
            <person name="Rey F.E."/>
            <person name="Seedorf H."/>
            <person name="Turnbaugh P.J."/>
            <person name="Fulton R.S."/>
            <person name="Wollam A."/>
            <person name="Shah N."/>
            <person name="Wang C."/>
            <person name="Magrini V."/>
            <person name="Wilson R.K."/>
            <person name="Cantarel B.L."/>
            <person name="Coutinho P.M."/>
            <person name="Henrissat B."/>
            <person name="Crock L.W."/>
            <person name="Russell A."/>
            <person name="Verberkmoes N.C."/>
            <person name="Hettich R.L."/>
            <person name="Gordon J.I."/>
        </authorList>
    </citation>
    <scope>NUCLEOTIDE SEQUENCE [LARGE SCALE GENOMIC DNA]</scope>
    <source>
        <strain>ATCC 33656 / DSM 3377 / JCM 17463 / KCTC 5835 / LMG 30912 / VPI 0990</strain>
    </source>
</reference>
<sequence length="122" mass="13312">MVSKKSRTEVRVKKHNRMRNHLAGTAQRPRLAVFRSNNHMYAQIIDDTVGNTLVSASTLDKDIKAELEKTNNVDAAAKLGTVIAKKALDKGISTVVFDRGGFIYAGKVKALAEAAREAGLDF</sequence>
<comment type="function">
    <text evidence="1">This is one of the proteins that bind and probably mediate the attachment of the 5S RNA into the large ribosomal subunit, where it forms part of the central protuberance.</text>
</comment>
<comment type="subunit">
    <text evidence="1">Part of the 50S ribosomal subunit; part of the 5S rRNA/L5/L18/L25 subcomplex. Contacts the 5S and 23S rRNAs.</text>
</comment>
<comment type="similarity">
    <text evidence="1">Belongs to the universal ribosomal protein uL18 family.</text>
</comment>
<proteinExistence type="inferred from homology"/>
<keyword id="KW-0687">Ribonucleoprotein</keyword>
<keyword id="KW-0689">Ribosomal protein</keyword>
<keyword id="KW-0694">RNA-binding</keyword>
<keyword id="KW-0699">rRNA-binding</keyword>
<protein>
    <recommendedName>
        <fullName evidence="1">Large ribosomal subunit protein uL18</fullName>
    </recommendedName>
    <alternativeName>
        <fullName evidence="2">50S ribosomal protein L18</fullName>
    </alternativeName>
</protein>
<organism>
    <name type="scientific">Agathobacter rectalis (strain ATCC 33656 / DSM 3377 / JCM 17463 / KCTC 5835 / VPI 0990)</name>
    <name type="common">Eubacterium rectale</name>
    <dbReference type="NCBI Taxonomy" id="515619"/>
    <lineage>
        <taxon>Bacteria</taxon>
        <taxon>Bacillati</taxon>
        <taxon>Bacillota</taxon>
        <taxon>Clostridia</taxon>
        <taxon>Lachnospirales</taxon>
        <taxon>Lachnospiraceae</taxon>
        <taxon>Agathobacter</taxon>
    </lineage>
</organism>
<evidence type="ECO:0000255" key="1">
    <source>
        <dbReference type="HAMAP-Rule" id="MF_01337"/>
    </source>
</evidence>
<evidence type="ECO:0000305" key="2"/>
<accession>C4ZBT4</accession>
<dbReference type="EMBL" id="CP001107">
    <property type="protein sequence ID" value="ACR74224.1"/>
    <property type="molecule type" value="Genomic_DNA"/>
</dbReference>
<dbReference type="RefSeq" id="WP_012741341.1">
    <property type="nucleotide sequence ID" value="NZ_CAXSYD010000003.1"/>
</dbReference>
<dbReference type="SMR" id="C4ZBT4"/>
<dbReference type="STRING" id="515619.EUBREC_0433"/>
<dbReference type="PaxDb" id="515619-EUBREC_0433"/>
<dbReference type="GeneID" id="86987344"/>
<dbReference type="KEGG" id="ere:EUBREC_0433"/>
<dbReference type="HOGENOM" id="CLU_098841_0_1_9"/>
<dbReference type="Proteomes" id="UP000001477">
    <property type="component" value="Chromosome"/>
</dbReference>
<dbReference type="GO" id="GO:0005737">
    <property type="term" value="C:cytoplasm"/>
    <property type="evidence" value="ECO:0007669"/>
    <property type="project" value="UniProtKB-ARBA"/>
</dbReference>
<dbReference type="GO" id="GO:1990904">
    <property type="term" value="C:ribonucleoprotein complex"/>
    <property type="evidence" value="ECO:0007669"/>
    <property type="project" value="UniProtKB-KW"/>
</dbReference>
<dbReference type="GO" id="GO:0005840">
    <property type="term" value="C:ribosome"/>
    <property type="evidence" value="ECO:0007669"/>
    <property type="project" value="UniProtKB-KW"/>
</dbReference>
<dbReference type="GO" id="GO:0008097">
    <property type="term" value="F:5S rRNA binding"/>
    <property type="evidence" value="ECO:0007669"/>
    <property type="project" value="TreeGrafter"/>
</dbReference>
<dbReference type="GO" id="GO:0003735">
    <property type="term" value="F:structural constituent of ribosome"/>
    <property type="evidence" value="ECO:0007669"/>
    <property type="project" value="InterPro"/>
</dbReference>
<dbReference type="GO" id="GO:0006412">
    <property type="term" value="P:translation"/>
    <property type="evidence" value="ECO:0007669"/>
    <property type="project" value="UniProtKB-UniRule"/>
</dbReference>
<dbReference type="CDD" id="cd00432">
    <property type="entry name" value="Ribosomal_L18_L5e"/>
    <property type="match status" value="1"/>
</dbReference>
<dbReference type="FunFam" id="3.30.420.100:FF:000001">
    <property type="entry name" value="50S ribosomal protein L18"/>
    <property type="match status" value="1"/>
</dbReference>
<dbReference type="Gene3D" id="3.30.420.100">
    <property type="match status" value="1"/>
</dbReference>
<dbReference type="HAMAP" id="MF_01337_B">
    <property type="entry name" value="Ribosomal_uL18_B"/>
    <property type="match status" value="1"/>
</dbReference>
<dbReference type="InterPro" id="IPR004389">
    <property type="entry name" value="Ribosomal_uL18_bac-type"/>
</dbReference>
<dbReference type="InterPro" id="IPR005484">
    <property type="entry name" value="Ribosomal_uL18_bac/euk"/>
</dbReference>
<dbReference type="NCBIfam" id="TIGR00060">
    <property type="entry name" value="L18_bact"/>
    <property type="match status" value="1"/>
</dbReference>
<dbReference type="PANTHER" id="PTHR12899">
    <property type="entry name" value="39S RIBOSOMAL PROTEIN L18, MITOCHONDRIAL"/>
    <property type="match status" value="1"/>
</dbReference>
<dbReference type="PANTHER" id="PTHR12899:SF3">
    <property type="entry name" value="LARGE RIBOSOMAL SUBUNIT PROTEIN UL18M"/>
    <property type="match status" value="1"/>
</dbReference>
<dbReference type="Pfam" id="PF00861">
    <property type="entry name" value="Ribosomal_L18p"/>
    <property type="match status" value="1"/>
</dbReference>
<dbReference type="SUPFAM" id="SSF53137">
    <property type="entry name" value="Translational machinery components"/>
    <property type="match status" value="1"/>
</dbReference>
<feature type="chain" id="PRO_1000214672" description="Large ribosomal subunit protein uL18">
    <location>
        <begin position="1"/>
        <end position="122"/>
    </location>
</feature>